<keyword id="KW-0963">Cytoplasm</keyword>
<keyword id="KW-0444">Lipid biosynthesis</keyword>
<keyword id="KW-0443">Lipid metabolism</keyword>
<keyword id="KW-0520">NAD</keyword>
<keyword id="KW-0521">NADP</keyword>
<keyword id="KW-0547">Nucleotide-binding</keyword>
<keyword id="KW-0560">Oxidoreductase</keyword>
<keyword id="KW-0594">Phospholipid biosynthesis</keyword>
<keyword id="KW-1208">Phospholipid metabolism</keyword>
<keyword id="KW-1185">Reference proteome</keyword>
<feature type="chain" id="PRO_0000255275" description="Glycerol-3-phosphate dehydrogenase [NAD(P)+]">
    <location>
        <begin position="1"/>
        <end position="343"/>
    </location>
</feature>
<feature type="active site" description="Proton acceptor" evidence="1">
    <location>
        <position position="193"/>
    </location>
</feature>
<feature type="binding site" evidence="1">
    <location>
        <position position="15"/>
    </location>
    <ligand>
        <name>NADPH</name>
        <dbReference type="ChEBI" id="CHEBI:57783"/>
    </ligand>
</feature>
<feature type="binding site" evidence="1">
    <location>
        <position position="16"/>
    </location>
    <ligand>
        <name>NADPH</name>
        <dbReference type="ChEBI" id="CHEBI:57783"/>
    </ligand>
</feature>
<feature type="binding site" evidence="1">
    <location>
        <position position="36"/>
    </location>
    <ligand>
        <name>NADPH</name>
        <dbReference type="ChEBI" id="CHEBI:57783"/>
    </ligand>
</feature>
<feature type="binding site" evidence="1">
    <location>
        <position position="110"/>
    </location>
    <ligand>
        <name>NADPH</name>
        <dbReference type="ChEBI" id="CHEBI:57783"/>
    </ligand>
</feature>
<feature type="binding site" evidence="1">
    <location>
        <position position="110"/>
    </location>
    <ligand>
        <name>sn-glycerol 3-phosphate</name>
        <dbReference type="ChEBI" id="CHEBI:57597"/>
    </ligand>
</feature>
<feature type="binding site" evidence="1">
    <location>
        <position position="138"/>
    </location>
    <ligand>
        <name>sn-glycerol 3-phosphate</name>
        <dbReference type="ChEBI" id="CHEBI:57597"/>
    </ligand>
</feature>
<feature type="binding site" evidence="1">
    <location>
        <position position="142"/>
    </location>
    <ligand>
        <name>NADPH</name>
        <dbReference type="ChEBI" id="CHEBI:57783"/>
    </ligand>
</feature>
<feature type="binding site" evidence="1">
    <location>
        <position position="193"/>
    </location>
    <ligand>
        <name>sn-glycerol 3-phosphate</name>
        <dbReference type="ChEBI" id="CHEBI:57597"/>
    </ligand>
</feature>
<feature type="binding site" evidence="1">
    <location>
        <position position="246"/>
    </location>
    <ligand>
        <name>sn-glycerol 3-phosphate</name>
        <dbReference type="ChEBI" id="CHEBI:57597"/>
    </ligand>
</feature>
<feature type="binding site" evidence="1">
    <location>
        <position position="256"/>
    </location>
    <ligand>
        <name>sn-glycerol 3-phosphate</name>
        <dbReference type="ChEBI" id="CHEBI:57597"/>
    </ligand>
</feature>
<feature type="binding site" evidence="1">
    <location>
        <position position="257"/>
    </location>
    <ligand>
        <name>NADPH</name>
        <dbReference type="ChEBI" id="CHEBI:57783"/>
    </ligand>
</feature>
<feature type="binding site" evidence="1">
    <location>
        <position position="257"/>
    </location>
    <ligand>
        <name>sn-glycerol 3-phosphate</name>
        <dbReference type="ChEBI" id="CHEBI:57597"/>
    </ligand>
</feature>
<feature type="binding site" evidence="1">
    <location>
        <position position="258"/>
    </location>
    <ligand>
        <name>sn-glycerol 3-phosphate</name>
        <dbReference type="ChEBI" id="CHEBI:57597"/>
    </ligand>
</feature>
<feature type="binding site" evidence="1">
    <location>
        <position position="283"/>
    </location>
    <ligand>
        <name>NADPH</name>
        <dbReference type="ChEBI" id="CHEBI:57783"/>
    </ligand>
</feature>
<protein>
    <recommendedName>
        <fullName evidence="1">Glycerol-3-phosphate dehydrogenase [NAD(P)+]</fullName>
        <ecNumber evidence="1">1.1.1.94</ecNumber>
    </recommendedName>
    <alternativeName>
        <fullName evidence="1">NAD(P)(+)-dependent glycerol-3-phosphate dehydrogenase</fullName>
    </alternativeName>
    <alternativeName>
        <fullName evidence="1">NAD(P)H-dependent dihydroxyacetone-phosphate reductase</fullName>
    </alternativeName>
</protein>
<proteinExistence type="inferred from homology"/>
<accession>Q0VPG2</accession>
<reference key="1">
    <citation type="journal article" date="2006" name="Nat. Biotechnol.">
        <title>Genome sequence of the ubiquitous hydrocarbon-degrading marine bacterium Alcanivorax borkumensis.</title>
        <authorList>
            <person name="Schneiker S."/>
            <person name="Martins dos Santos V.A.P."/>
            <person name="Bartels D."/>
            <person name="Bekel T."/>
            <person name="Brecht M."/>
            <person name="Buhrmester J."/>
            <person name="Chernikova T.N."/>
            <person name="Denaro R."/>
            <person name="Ferrer M."/>
            <person name="Gertler C."/>
            <person name="Goesmann A."/>
            <person name="Golyshina O.V."/>
            <person name="Kaminski F."/>
            <person name="Khachane A.N."/>
            <person name="Lang S."/>
            <person name="Linke B."/>
            <person name="McHardy A.C."/>
            <person name="Meyer F."/>
            <person name="Nechitaylo T."/>
            <person name="Puehler A."/>
            <person name="Regenhardt D."/>
            <person name="Rupp O."/>
            <person name="Sabirova J.S."/>
            <person name="Selbitschka W."/>
            <person name="Yakimov M.M."/>
            <person name="Timmis K.N."/>
            <person name="Vorhoelter F.-J."/>
            <person name="Weidner S."/>
            <person name="Kaiser O."/>
            <person name="Golyshin P.N."/>
        </authorList>
    </citation>
    <scope>NUCLEOTIDE SEQUENCE [LARGE SCALE GENOMIC DNA]</scope>
    <source>
        <strain>ATCC 700651 / DSM 11573 / NCIMB 13689 / SK2</strain>
    </source>
</reference>
<gene>
    <name evidence="1" type="primary">gpsA</name>
    <name type="ordered locus">ABO_1488</name>
</gene>
<sequence>MTQEKHNAAILGGGSFGTAMASILAANGHNVNLWVRDPETAAAINIDRENTRYLPGAELPKEVTATDSLEEALGGASMVFVAIPSKAFAEVLEQARQWVPDEAVVISCTKGIYADGFLLMSELLHQYWPHTRIGVLSGPNLAKEVVEQKFTGTVIASPDETLRQTVQNALSCDYFRVYDNPDIYGVELGGALKNIYAVASGMAAAIGVGENSRSFLITRALAEMSRFAVKLGANPMTFLGLSGVGDLIATCTSSLSRNYQVGFQLGEGKTLEQAIECLGQTAEGINTIKLVADKAAELDVYMPLATALYKIVYHGQPLELMIQNLMSGEYKHDVEFQLGAFTS</sequence>
<dbReference type="EC" id="1.1.1.94" evidence="1"/>
<dbReference type="EMBL" id="AM286690">
    <property type="protein sequence ID" value="CAL16936.1"/>
    <property type="molecule type" value="Genomic_DNA"/>
</dbReference>
<dbReference type="RefSeq" id="WP_011588769.1">
    <property type="nucleotide sequence ID" value="NC_008260.1"/>
</dbReference>
<dbReference type="SMR" id="Q0VPG2"/>
<dbReference type="STRING" id="393595.ABO_1488"/>
<dbReference type="KEGG" id="abo:ABO_1488"/>
<dbReference type="eggNOG" id="COG0240">
    <property type="taxonomic scope" value="Bacteria"/>
</dbReference>
<dbReference type="HOGENOM" id="CLU_033449_0_2_6"/>
<dbReference type="OrthoDB" id="9812273at2"/>
<dbReference type="UniPathway" id="UPA00940"/>
<dbReference type="Proteomes" id="UP000008871">
    <property type="component" value="Chromosome"/>
</dbReference>
<dbReference type="GO" id="GO:0005829">
    <property type="term" value="C:cytosol"/>
    <property type="evidence" value="ECO:0007669"/>
    <property type="project" value="TreeGrafter"/>
</dbReference>
<dbReference type="GO" id="GO:0047952">
    <property type="term" value="F:glycerol-3-phosphate dehydrogenase [NAD(P)+] activity"/>
    <property type="evidence" value="ECO:0007669"/>
    <property type="project" value="UniProtKB-UniRule"/>
</dbReference>
<dbReference type="GO" id="GO:0051287">
    <property type="term" value="F:NAD binding"/>
    <property type="evidence" value="ECO:0007669"/>
    <property type="project" value="InterPro"/>
</dbReference>
<dbReference type="GO" id="GO:0005975">
    <property type="term" value="P:carbohydrate metabolic process"/>
    <property type="evidence" value="ECO:0007669"/>
    <property type="project" value="InterPro"/>
</dbReference>
<dbReference type="GO" id="GO:0046167">
    <property type="term" value="P:glycerol-3-phosphate biosynthetic process"/>
    <property type="evidence" value="ECO:0007669"/>
    <property type="project" value="UniProtKB-UniRule"/>
</dbReference>
<dbReference type="GO" id="GO:0046168">
    <property type="term" value="P:glycerol-3-phosphate catabolic process"/>
    <property type="evidence" value="ECO:0007669"/>
    <property type="project" value="InterPro"/>
</dbReference>
<dbReference type="GO" id="GO:0046474">
    <property type="term" value="P:glycerophospholipid biosynthetic process"/>
    <property type="evidence" value="ECO:0007669"/>
    <property type="project" value="TreeGrafter"/>
</dbReference>
<dbReference type="FunFam" id="1.10.1040.10:FF:000001">
    <property type="entry name" value="Glycerol-3-phosphate dehydrogenase [NAD(P)+]"/>
    <property type="match status" value="1"/>
</dbReference>
<dbReference type="FunFam" id="3.40.50.720:FF:000019">
    <property type="entry name" value="Glycerol-3-phosphate dehydrogenase [NAD(P)+]"/>
    <property type="match status" value="1"/>
</dbReference>
<dbReference type="Gene3D" id="1.10.1040.10">
    <property type="entry name" value="N-(1-d-carboxylethyl)-l-norvaline Dehydrogenase, domain 2"/>
    <property type="match status" value="1"/>
</dbReference>
<dbReference type="Gene3D" id="3.40.50.720">
    <property type="entry name" value="NAD(P)-binding Rossmann-like Domain"/>
    <property type="match status" value="1"/>
</dbReference>
<dbReference type="HAMAP" id="MF_00394">
    <property type="entry name" value="NAD_Glyc3P_dehydrog"/>
    <property type="match status" value="1"/>
</dbReference>
<dbReference type="InterPro" id="IPR008927">
    <property type="entry name" value="6-PGluconate_DH-like_C_sf"/>
</dbReference>
<dbReference type="InterPro" id="IPR013328">
    <property type="entry name" value="6PGD_dom2"/>
</dbReference>
<dbReference type="InterPro" id="IPR006168">
    <property type="entry name" value="G3P_DH_NAD-dep"/>
</dbReference>
<dbReference type="InterPro" id="IPR006109">
    <property type="entry name" value="G3P_DH_NAD-dep_C"/>
</dbReference>
<dbReference type="InterPro" id="IPR011128">
    <property type="entry name" value="G3P_DH_NAD-dep_N"/>
</dbReference>
<dbReference type="InterPro" id="IPR036291">
    <property type="entry name" value="NAD(P)-bd_dom_sf"/>
</dbReference>
<dbReference type="NCBIfam" id="NF000940">
    <property type="entry name" value="PRK00094.1-2"/>
    <property type="match status" value="1"/>
</dbReference>
<dbReference type="NCBIfam" id="NF000942">
    <property type="entry name" value="PRK00094.1-4"/>
    <property type="match status" value="1"/>
</dbReference>
<dbReference type="NCBIfam" id="NF000946">
    <property type="entry name" value="PRK00094.2-4"/>
    <property type="match status" value="1"/>
</dbReference>
<dbReference type="PANTHER" id="PTHR11728">
    <property type="entry name" value="GLYCEROL-3-PHOSPHATE DEHYDROGENASE"/>
    <property type="match status" value="1"/>
</dbReference>
<dbReference type="PANTHER" id="PTHR11728:SF1">
    <property type="entry name" value="GLYCEROL-3-PHOSPHATE DEHYDROGENASE [NAD(+)] 2, CHLOROPLASTIC"/>
    <property type="match status" value="1"/>
</dbReference>
<dbReference type="Pfam" id="PF07479">
    <property type="entry name" value="NAD_Gly3P_dh_C"/>
    <property type="match status" value="1"/>
</dbReference>
<dbReference type="Pfam" id="PF01210">
    <property type="entry name" value="NAD_Gly3P_dh_N"/>
    <property type="match status" value="1"/>
</dbReference>
<dbReference type="PIRSF" id="PIRSF000114">
    <property type="entry name" value="Glycerol-3-P_dh"/>
    <property type="match status" value="1"/>
</dbReference>
<dbReference type="PRINTS" id="PR00077">
    <property type="entry name" value="GPDHDRGNASE"/>
</dbReference>
<dbReference type="SUPFAM" id="SSF48179">
    <property type="entry name" value="6-phosphogluconate dehydrogenase C-terminal domain-like"/>
    <property type="match status" value="1"/>
</dbReference>
<dbReference type="SUPFAM" id="SSF51735">
    <property type="entry name" value="NAD(P)-binding Rossmann-fold domains"/>
    <property type="match status" value="1"/>
</dbReference>
<dbReference type="PROSITE" id="PS00957">
    <property type="entry name" value="NAD_G3PDH"/>
    <property type="match status" value="1"/>
</dbReference>
<organism>
    <name type="scientific">Alcanivorax borkumensis (strain ATCC 700651 / DSM 11573 / NCIMB 13689 / SK2)</name>
    <dbReference type="NCBI Taxonomy" id="393595"/>
    <lineage>
        <taxon>Bacteria</taxon>
        <taxon>Pseudomonadati</taxon>
        <taxon>Pseudomonadota</taxon>
        <taxon>Gammaproteobacteria</taxon>
        <taxon>Oceanospirillales</taxon>
        <taxon>Alcanivoracaceae</taxon>
        <taxon>Alcanivorax</taxon>
    </lineage>
</organism>
<evidence type="ECO:0000255" key="1">
    <source>
        <dbReference type="HAMAP-Rule" id="MF_00394"/>
    </source>
</evidence>
<comment type="function">
    <text evidence="1">Catalyzes the reduction of the glycolytic intermediate dihydroxyacetone phosphate (DHAP) to sn-glycerol 3-phosphate (G3P), the key precursor for phospholipid synthesis.</text>
</comment>
<comment type="catalytic activity">
    <reaction evidence="1">
        <text>sn-glycerol 3-phosphate + NAD(+) = dihydroxyacetone phosphate + NADH + H(+)</text>
        <dbReference type="Rhea" id="RHEA:11092"/>
        <dbReference type="ChEBI" id="CHEBI:15378"/>
        <dbReference type="ChEBI" id="CHEBI:57540"/>
        <dbReference type="ChEBI" id="CHEBI:57597"/>
        <dbReference type="ChEBI" id="CHEBI:57642"/>
        <dbReference type="ChEBI" id="CHEBI:57945"/>
        <dbReference type="EC" id="1.1.1.94"/>
    </reaction>
    <physiologicalReaction direction="right-to-left" evidence="1">
        <dbReference type="Rhea" id="RHEA:11094"/>
    </physiologicalReaction>
</comment>
<comment type="catalytic activity">
    <reaction evidence="1">
        <text>sn-glycerol 3-phosphate + NADP(+) = dihydroxyacetone phosphate + NADPH + H(+)</text>
        <dbReference type="Rhea" id="RHEA:11096"/>
        <dbReference type="ChEBI" id="CHEBI:15378"/>
        <dbReference type="ChEBI" id="CHEBI:57597"/>
        <dbReference type="ChEBI" id="CHEBI:57642"/>
        <dbReference type="ChEBI" id="CHEBI:57783"/>
        <dbReference type="ChEBI" id="CHEBI:58349"/>
        <dbReference type="EC" id="1.1.1.94"/>
    </reaction>
    <physiologicalReaction direction="right-to-left" evidence="1">
        <dbReference type="Rhea" id="RHEA:11098"/>
    </physiologicalReaction>
</comment>
<comment type="pathway">
    <text evidence="1">Membrane lipid metabolism; glycerophospholipid metabolism.</text>
</comment>
<comment type="subcellular location">
    <subcellularLocation>
        <location evidence="1">Cytoplasm</location>
    </subcellularLocation>
</comment>
<comment type="similarity">
    <text evidence="1">Belongs to the NAD-dependent glycerol-3-phosphate dehydrogenase family.</text>
</comment>
<name>GPDA_ALCBS</name>